<feature type="chain" id="PRO_0000071372" description="Putative sel1-like repeat-containing protein R850">
    <location>
        <begin position="1"/>
        <end position="516"/>
    </location>
</feature>
<feature type="repeat" description="Sel1-like 1">
    <location>
        <begin position="103"/>
        <end position="138"/>
    </location>
</feature>
<feature type="repeat" description="Sel1-like 2">
    <location>
        <begin position="230"/>
        <end position="265"/>
    </location>
</feature>
<name>YR850_MIMIV</name>
<accession>Q5UP31</accession>
<reference key="1">
    <citation type="journal article" date="2004" name="Science">
        <title>The 1.2-megabase genome sequence of Mimivirus.</title>
        <authorList>
            <person name="Raoult D."/>
            <person name="Audic S."/>
            <person name="Robert C."/>
            <person name="Abergel C."/>
            <person name="Renesto P."/>
            <person name="Ogata H."/>
            <person name="La Scola B."/>
            <person name="Susan M."/>
            <person name="Claverie J.-M."/>
        </authorList>
    </citation>
    <scope>NUCLEOTIDE SEQUENCE [LARGE SCALE GENOMIC DNA]</scope>
    <source>
        <strain>Rowbotham-Bradford</strain>
    </source>
</reference>
<proteinExistence type="predicted"/>
<organismHost>
    <name type="scientific">Acanthamoeba polyphaga</name>
    <name type="common">Amoeba</name>
    <dbReference type="NCBI Taxonomy" id="5757"/>
</organismHost>
<sequence length="516" mass="60925">MVTMDNSDKIYDLIGSANNNDVDSQNELVRVFVHNCFIRSVLTFAKPFKWNNIVENAIQDSNYTYFILCFHGHKYNRVKYQEIYKKIIDGLFLRISKSSSLDALTYNNLGFIYHNDIFKKNKVIKVISHYCKAVNMNSKHAQYNLATFIRLNYYKQEFVKLLSKTVFKDSTLPISKEIIFKKIYELYKLSASQFNPNAEHSLSTTCEFREFIGQKERDKWLKKSAKNGLSISQYSIGTKYLGGDVTNRKYQKGIIYLKNSAKQGDTGSQISLINIYSKEYGKNIMTNINEMMYWYLNCEQYTSFFMNIFDVFPIVCNTMEIDNKSNEENQNITNIETIILSKIQLLLVKIKYDCVCNNSITITNILDELENKFFKIIESRQKIQNSSSIFYISQMRLVDSVYQNIIDQQNKTGIIPFVKNYLVDEEIYMSIGFDSIEICDQLEILLNNDMYAENIVELLWRLDELCKEKSYYSKILKITNMLENYRSQVITFLEDNLTLRENYFFKKYKHIQRNYF</sequence>
<organism>
    <name type="scientific">Acanthamoeba polyphaga mimivirus</name>
    <name type="common">APMV</name>
    <dbReference type="NCBI Taxonomy" id="212035"/>
    <lineage>
        <taxon>Viruses</taxon>
        <taxon>Varidnaviria</taxon>
        <taxon>Bamfordvirae</taxon>
        <taxon>Nucleocytoviricota</taxon>
        <taxon>Megaviricetes</taxon>
        <taxon>Imitervirales</taxon>
        <taxon>Mimiviridae</taxon>
        <taxon>Megamimivirinae</taxon>
        <taxon>Mimivirus</taxon>
        <taxon>Mimivirus bradfordmassiliense</taxon>
    </lineage>
</organism>
<protein>
    <recommendedName>
        <fullName>Putative sel1-like repeat-containing protein R850</fullName>
    </recommendedName>
</protein>
<dbReference type="EMBL" id="AY653733">
    <property type="protein sequence ID" value="AAV51108.1"/>
    <property type="molecule type" value="Genomic_DNA"/>
</dbReference>
<dbReference type="SMR" id="Q5UP31"/>
<dbReference type="KEGG" id="vg:9925512"/>
<dbReference type="Proteomes" id="UP000001134">
    <property type="component" value="Genome"/>
</dbReference>
<dbReference type="GO" id="GO:0036503">
    <property type="term" value="P:ERAD pathway"/>
    <property type="evidence" value="ECO:0007669"/>
    <property type="project" value="TreeGrafter"/>
</dbReference>
<dbReference type="Gene3D" id="1.25.40.10">
    <property type="entry name" value="Tetratricopeptide repeat domain"/>
    <property type="match status" value="1"/>
</dbReference>
<dbReference type="InterPro" id="IPR006597">
    <property type="entry name" value="Sel1-like"/>
</dbReference>
<dbReference type="InterPro" id="IPR050767">
    <property type="entry name" value="Sel1_AlgK"/>
</dbReference>
<dbReference type="InterPro" id="IPR011990">
    <property type="entry name" value="TPR-like_helical_dom_sf"/>
</dbReference>
<dbReference type="PANTHER" id="PTHR11102">
    <property type="entry name" value="SEL-1-LIKE PROTEIN"/>
    <property type="match status" value="1"/>
</dbReference>
<dbReference type="PANTHER" id="PTHR11102:SF147">
    <property type="entry name" value="SEL1L ADAPTOR SUBUNIT OF ERAD E3 UBIQUITIN LIGASE"/>
    <property type="match status" value="1"/>
</dbReference>
<dbReference type="SMART" id="SM00671">
    <property type="entry name" value="SEL1"/>
    <property type="match status" value="2"/>
</dbReference>
<dbReference type="SUPFAM" id="SSF81901">
    <property type="entry name" value="HCP-like"/>
    <property type="match status" value="2"/>
</dbReference>
<keyword id="KW-1185">Reference proteome</keyword>
<keyword id="KW-0677">Repeat</keyword>
<gene>
    <name type="ordered locus">MIMI_R850</name>
</gene>